<dbReference type="EMBL" id="CP001176">
    <property type="protein sequence ID" value="ACK62768.1"/>
    <property type="molecule type" value="Genomic_DNA"/>
</dbReference>
<dbReference type="RefSeq" id="WP_000348590.1">
    <property type="nucleotide sequence ID" value="NZ_VEHB01000006.1"/>
</dbReference>
<dbReference type="SMR" id="B7HE22"/>
<dbReference type="KEGG" id="bcb:BCB4264_A4507"/>
<dbReference type="HOGENOM" id="CLU_162466_0_0_9"/>
<dbReference type="Proteomes" id="UP000007096">
    <property type="component" value="Chromosome"/>
</dbReference>
<dbReference type="HAMAP" id="MF_01507">
    <property type="entry name" value="UPF0297"/>
    <property type="match status" value="1"/>
</dbReference>
<dbReference type="InterPro" id="IPR009309">
    <property type="entry name" value="IreB"/>
</dbReference>
<dbReference type="NCBIfam" id="NF003997">
    <property type="entry name" value="PRK05473.1"/>
    <property type="match status" value="1"/>
</dbReference>
<dbReference type="PANTHER" id="PTHR40067">
    <property type="entry name" value="UPF0297 PROTEIN YRZL"/>
    <property type="match status" value="1"/>
</dbReference>
<dbReference type="PANTHER" id="PTHR40067:SF1">
    <property type="entry name" value="UPF0297 PROTEIN YRZL"/>
    <property type="match status" value="1"/>
</dbReference>
<dbReference type="Pfam" id="PF06135">
    <property type="entry name" value="IreB"/>
    <property type="match status" value="1"/>
</dbReference>
<dbReference type="PIRSF" id="PIRSF037258">
    <property type="entry name" value="DUF965_bac"/>
    <property type="match status" value="1"/>
</dbReference>
<feature type="chain" id="PRO_1000198228" description="UPF0297 protein BCB4264_A4507">
    <location>
        <begin position="1"/>
        <end position="88"/>
    </location>
</feature>
<reference key="1">
    <citation type="submission" date="2008-10" db="EMBL/GenBank/DDBJ databases">
        <title>Genome sequence of Bacillus cereus B4264.</title>
        <authorList>
            <person name="Dodson R.J."/>
            <person name="Durkin A.S."/>
            <person name="Rosovitz M.J."/>
            <person name="Rasko D.A."/>
            <person name="Hoffmaster A."/>
            <person name="Ravel J."/>
            <person name="Sutton G."/>
        </authorList>
    </citation>
    <scope>NUCLEOTIDE SEQUENCE [LARGE SCALE GENOMIC DNA]</scope>
    <source>
        <strain>B4264</strain>
    </source>
</reference>
<gene>
    <name type="ordered locus">BCB4264_A4507</name>
</gene>
<protein>
    <recommendedName>
        <fullName evidence="1">UPF0297 protein BCB4264_A4507</fullName>
    </recommendedName>
</protein>
<comment type="similarity">
    <text evidence="1">Belongs to the UPF0297 family.</text>
</comment>
<name>Y4507_BACC4</name>
<evidence type="ECO:0000255" key="1">
    <source>
        <dbReference type="HAMAP-Rule" id="MF_01507"/>
    </source>
</evidence>
<organism>
    <name type="scientific">Bacillus cereus (strain B4264)</name>
    <dbReference type="NCBI Taxonomy" id="405532"/>
    <lineage>
        <taxon>Bacteria</taxon>
        <taxon>Bacillati</taxon>
        <taxon>Bacillota</taxon>
        <taxon>Bacilli</taxon>
        <taxon>Bacillales</taxon>
        <taxon>Bacillaceae</taxon>
        <taxon>Bacillus</taxon>
        <taxon>Bacillus cereus group</taxon>
    </lineage>
</organism>
<sequence>MDGFDKTMKFSIQDEKQSVHVNDVLLTVYDALQEKGYNPINQIVGYLLSGDPAYIPRHKDARSIIRKLERDELIEELVKSYLKHHREE</sequence>
<proteinExistence type="inferred from homology"/>
<accession>B7HE22</accession>